<evidence type="ECO:0000250" key="1"/>
<evidence type="ECO:0000250" key="2">
    <source>
        <dbReference type="UniProtKB" id="P09713"/>
    </source>
</evidence>
<evidence type="ECO:0000255" key="3"/>
<evidence type="ECO:0000305" key="4"/>
<keyword id="KW-1015">Disulfide bond</keyword>
<keyword id="KW-0244">Early protein</keyword>
<keyword id="KW-0325">Glycoprotein</keyword>
<keyword id="KW-1038">Host endoplasmic reticulum</keyword>
<keyword id="KW-1043">Host membrane</keyword>
<keyword id="KW-0945">Host-virus interaction</keyword>
<keyword id="KW-0393">Immunoglobulin domain</keyword>
<keyword id="KW-0472">Membrane</keyword>
<keyword id="KW-1185">Reference proteome</keyword>
<keyword id="KW-0732">Signal</keyword>
<keyword id="KW-0812">Transmembrane</keyword>
<keyword id="KW-1133">Transmembrane helix</keyword>
<keyword id="KW-0899">Viral immunoevasion</keyword>
<feature type="chain" id="PRO_0000418292" description="Unique short US2 glycoprotein">
    <location>
        <begin position="1"/>
        <end position="199"/>
    </location>
</feature>
<feature type="signal peptide" description="Not cleaved">
    <location>
        <begin position="1"/>
        <end status="unknown"/>
    </location>
</feature>
<feature type="topological domain" description="Lumenal" evidence="3">
    <location>
        <begin position="1"/>
        <end position="161"/>
    </location>
</feature>
<feature type="transmembrane region" description="Helical" evidence="3">
    <location>
        <begin position="162"/>
        <end position="182"/>
    </location>
</feature>
<feature type="topological domain" description="Cytoplasmic" evidence="3">
    <location>
        <begin position="183"/>
        <end position="199"/>
    </location>
</feature>
<feature type="domain" description="Ig-like H-type">
    <location>
        <begin position="43"/>
        <end position="137"/>
    </location>
</feature>
<feature type="glycosylation site" description="N-linked (GlcNAc...) asparagine; by host" evidence="2">
    <location>
        <position position="68"/>
    </location>
</feature>
<feature type="disulfide bond" evidence="2">
    <location>
        <begin position="52"/>
        <end position="133"/>
    </location>
</feature>
<reference key="1">
    <citation type="journal article" date="2004" name="J. Gen. Virol.">
        <title>Genetic content of wild-type human cytomegalovirus.</title>
        <authorList>
            <person name="Dolan A."/>
            <person name="Cunningham C."/>
            <person name="Hector R.D."/>
            <person name="Hassan-Walker A.F."/>
            <person name="Lee L."/>
            <person name="Addison C."/>
            <person name="Dargan D.J."/>
            <person name="McGeoch D.J."/>
            <person name="Gatherer D."/>
            <person name="Emery V.C."/>
            <person name="Griffiths P.D."/>
            <person name="Sinzger C."/>
            <person name="McSharry B.P."/>
            <person name="Wilkinson G.W.G."/>
            <person name="Davison A.J."/>
        </authorList>
    </citation>
    <scope>NUCLEOTIDE SEQUENCE [LARGE SCALE GENOMIC DNA]</scope>
</reference>
<organism>
    <name type="scientific">Human cytomegalovirus (strain Merlin)</name>
    <name type="common">HHV-5</name>
    <name type="synonym">Human herpesvirus 5</name>
    <dbReference type="NCBI Taxonomy" id="295027"/>
    <lineage>
        <taxon>Viruses</taxon>
        <taxon>Duplodnaviria</taxon>
        <taxon>Heunggongvirae</taxon>
        <taxon>Peploviricota</taxon>
        <taxon>Herviviricetes</taxon>
        <taxon>Herpesvirales</taxon>
        <taxon>Orthoherpesviridae</taxon>
        <taxon>Betaherpesvirinae</taxon>
        <taxon>Cytomegalovirus</taxon>
        <taxon>Cytomegalovirus humanbeta5</taxon>
        <taxon>Human cytomegalovirus</taxon>
    </lineage>
</organism>
<comment type="function">
    <text evidence="2">Participates in the inhibition of the host immune response. Early protein that redirects newly synthesized major histocompatibility complex (MHC) class I heavy chains via the SEC61 translocon to the cytosol where they undergo proteasome-dependent destruction. In consequence, infected cells are masked for immune recognition by cytotoxic T lymphocytes. Seems so far to be specific for HLA-A, HLA-B, and HFE loci products. Does not interact with HLA-DR or HLA-DM.</text>
</comment>
<comment type="subunit">
    <text evidence="2">Monomer. Interacts with host TRAM1.</text>
</comment>
<comment type="subcellular location">
    <subcellularLocation>
        <location evidence="1">Host endoplasmic reticulum membrane</location>
        <topology evidence="1">Single-pass type I membrane protein</topology>
    </subcellularLocation>
</comment>
<comment type="developmental stage">
    <text>Expressed at early period of virus infection.</text>
</comment>
<comment type="domain">
    <text>The lumenal domain allows tight interaction with class I molecules encoded by the HLA-A locus.</text>
</comment>
<comment type="PTM">
    <text evidence="1">The signal sequence is not cleaved.</text>
</comment>
<comment type="similarity">
    <text evidence="4">Belongs to the cytomegalovirus US2 family.</text>
</comment>
<name>US02_HCMVM</name>
<dbReference type="EMBL" id="AY446894">
    <property type="protein sequence ID" value="AAR31693.1"/>
    <property type="molecule type" value="Genomic_DNA"/>
</dbReference>
<dbReference type="RefSeq" id="YP_081589.1">
    <property type="nucleotide sequence ID" value="NC_006273.2"/>
</dbReference>
<dbReference type="SMR" id="F5HE05"/>
<dbReference type="BioGRID" id="1678095">
    <property type="interactions" value="1"/>
</dbReference>
<dbReference type="GlyCosmos" id="F5HE05">
    <property type="glycosylation" value="1 site, No reported glycans"/>
</dbReference>
<dbReference type="DNASU" id="3077542"/>
<dbReference type="GeneID" id="3077542"/>
<dbReference type="KEGG" id="vg:3077542"/>
<dbReference type="Reactome" id="R-HSA-9609690">
    <property type="pathway name" value="HCMV Early Events"/>
</dbReference>
<dbReference type="Proteomes" id="UP000000938">
    <property type="component" value="Segment"/>
</dbReference>
<dbReference type="GO" id="GO:0044167">
    <property type="term" value="C:host cell endoplasmic reticulum membrane"/>
    <property type="evidence" value="ECO:0007669"/>
    <property type="project" value="UniProtKB-SubCell"/>
</dbReference>
<dbReference type="GO" id="GO:0016020">
    <property type="term" value="C:membrane"/>
    <property type="evidence" value="ECO:0007669"/>
    <property type="project" value="UniProtKB-KW"/>
</dbReference>
<dbReference type="Gene3D" id="2.60.40.1200">
    <property type="match status" value="1"/>
</dbReference>
<dbReference type="InterPro" id="IPR009237">
    <property type="entry name" value="Herpes_US2/US3"/>
</dbReference>
<dbReference type="InterPro" id="IPR014756">
    <property type="entry name" value="Ig_E-set"/>
</dbReference>
<dbReference type="Pfam" id="PF05963">
    <property type="entry name" value="Cytomega_US3"/>
    <property type="match status" value="1"/>
</dbReference>
<dbReference type="SUPFAM" id="SSF81296">
    <property type="entry name" value="E set domains"/>
    <property type="match status" value="1"/>
</dbReference>
<accession>F5HE05</accession>
<organismHost>
    <name type="scientific">Homo sapiens</name>
    <name type="common">Human</name>
    <dbReference type="NCBI Taxonomy" id="9606"/>
</organismHost>
<sequence length="199" mass="23112">MNNLWKAWVGLWTSMGPLIRLPDGITKAGEDALRPWKSTAKHPWFEIEDNRCYIDNGKLFARGSIVGNMSRFVFDPKADYGGVGENLYVHADDVEFVPGESLKWNVRNLDVMPIFETLALRLVLQGDVIWLRCVPELRVDYTSSAYMWNMQYGMVRKSYTHVAWTIVFYSINITLLVLFIVYVTVDCNLSMMWMRFFVC</sequence>
<gene>
    <name type="primary">US2</name>
</gene>
<proteinExistence type="evidence at transcript level"/>
<protein>
    <recommendedName>
        <fullName>Unique short US2 glycoprotein</fullName>
    </recommendedName>
    <alternativeName>
        <fullName>Protein HQLF2</fullName>
    </alternativeName>
    <alternativeName>
        <fullName>gpUS2</fullName>
    </alternativeName>
</protein>